<dbReference type="SMR" id="P56596"/>
<dbReference type="GO" id="GO:0009538">
    <property type="term" value="C:photosystem I reaction center"/>
    <property type="evidence" value="ECO:0007669"/>
    <property type="project" value="InterPro"/>
</dbReference>
<dbReference type="GO" id="GO:0015979">
    <property type="term" value="P:photosynthesis"/>
    <property type="evidence" value="ECO:0007669"/>
    <property type="project" value="UniProtKB-KW"/>
</dbReference>
<dbReference type="Gene3D" id="3.30.1470.10">
    <property type="entry name" value="Photosystem I PsaD, reaction center subunit II"/>
    <property type="match status" value="1"/>
</dbReference>
<dbReference type="InterPro" id="IPR003685">
    <property type="entry name" value="PsaD"/>
</dbReference>
<dbReference type="InterPro" id="IPR036579">
    <property type="entry name" value="PsaD_sf"/>
</dbReference>
<dbReference type="PANTHER" id="PTHR31982:SF5">
    <property type="entry name" value="PHOTOSYSTEM I REACTION CENTER SUBUNIT II, CHLOROPLASTIC"/>
    <property type="match status" value="1"/>
</dbReference>
<dbReference type="PANTHER" id="PTHR31982">
    <property type="entry name" value="PHOTOSYSTEM I REACTION CENTER SUBUNIT II-1, CHLOROPLASTIC-RELATED"/>
    <property type="match status" value="1"/>
</dbReference>
<dbReference type="Pfam" id="PF02531">
    <property type="entry name" value="PsaD"/>
    <property type="match status" value="1"/>
</dbReference>
<dbReference type="SUPFAM" id="SSF64234">
    <property type="entry name" value="Photosystem I subunit PsaD"/>
    <property type="match status" value="1"/>
</dbReference>
<evidence type="ECO:0000305" key="1"/>
<protein>
    <recommendedName>
        <fullName>Photosystem I reaction center subunit II</fullName>
    </recommendedName>
    <alternativeName>
        <fullName>Photosystem I 16 kDa polypeptide</fullName>
        <shortName>PSI-D</shortName>
    </alternativeName>
</protein>
<accession>P56596</accession>
<feature type="chain" id="PRO_0000206052" description="Photosystem I reaction center subunit II">
    <location>
        <begin position="1"/>
        <end position="138"/>
    </location>
</feature>
<name>PSAD_NOSS8</name>
<organism>
    <name type="scientific">Nostoc sp. (strain PCC 8009)</name>
    <dbReference type="NCBI Taxonomy" id="29413"/>
    <lineage>
        <taxon>Bacteria</taxon>
        <taxon>Bacillati</taxon>
        <taxon>Cyanobacteriota</taxon>
        <taxon>Cyanophyceae</taxon>
        <taxon>Nostocales</taxon>
        <taxon>Nostocaceae</taxon>
        <taxon>Nostoc</taxon>
    </lineage>
</organism>
<reference key="1">
    <citation type="journal article" date="1998" name="Eur. J. Biochem.">
        <title>Structure and properties in solution of PsaD, an extrinsic polypeptide of photosystem I.</title>
        <authorList>
            <person name="Xia Z."/>
            <person name="Broadhurst R.W."/>
            <person name="Laue E.D."/>
            <person name="Bryant D.A."/>
            <person name="Golbeck J.H."/>
            <person name="Bendall D.S."/>
        </authorList>
    </citation>
    <scope>STRUCTURE BY NMR</scope>
</reference>
<keyword id="KW-0602">Photosynthesis</keyword>
<keyword id="KW-0603">Photosystem I</keyword>
<proteinExistence type="evidence at protein level"/>
<gene>
    <name type="primary">psaD</name>
</gene>
<comment type="function">
    <text>PsaD can form complexes with ferredoxin and ferredoxin-oxidoreductase in photosystem I (PS I) reaction center.</text>
</comment>
<comment type="similarity">
    <text evidence="1">Belongs to the PsaD family.</text>
</comment>
<sequence length="138" mass="15240">AEQLSGKTPLFAGSTGGLLTKANVEEKYAITWTSPKAQVFELPTGGAATMNQGENLLYLARKEQGIALGGQLRKFKITDYKIYRIFPNGETTFIHPADGVFPEKVNEGREKVRFVPRRIGQNPSPAQLKFSGKYTYDA</sequence>